<comment type="function">
    <text evidence="1">Catalyzes the NADPH-dependent reduction of glutamyl-tRNA(Glu) to glutamate 1-semialdehyde (GSA).</text>
</comment>
<comment type="catalytic activity">
    <reaction evidence="1">
        <text>(S)-4-amino-5-oxopentanoate + tRNA(Glu) + NADP(+) = L-glutamyl-tRNA(Glu) + NADPH + H(+)</text>
        <dbReference type="Rhea" id="RHEA:12344"/>
        <dbReference type="Rhea" id="RHEA-COMP:9663"/>
        <dbReference type="Rhea" id="RHEA-COMP:9680"/>
        <dbReference type="ChEBI" id="CHEBI:15378"/>
        <dbReference type="ChEBI" id="CHEBI:57501"/>
        <dbReference type="ChEBI" id="CHEBI:57783"/>
        <dbReference type="ChEBI" id="CHEBI:58349"/>
        <dbReference type="ChEBI" id="CHEBI:78442"/>
        <dbReference type="ChEBI" id="CHEBI:78520"/>
        <dbReference type="EC" id="1.2.1.70"/>
    </reaction>
</comment>
<comment type="pathway">
    <text evidence="1">Porphyrin-containing compound metabolism; protoporphyrin-IX biosynthesis; 5-aminolevulinate from L-glutamyl-tRNA(Glu): step 1/2.</text>
</comment>
<comment type="subunit">
    <text evidence="1">Homodimer.</text>
</comment>
<comment type="domain">
    <text evidence="1">Possesses an unusual extended V-shaped dimeric structure with each monomer consisting of three distinct domains arranged along a curved 'spinal' alpha-helix. The N-terminal catalytic domain specifically recognizes the glutamate moiety of the substrate. The second domain is the NADPH-binding domain, and the third C-terminal domain is responsible for dimerization.</text>
</comment>
<comment type="miscellaneous">
    <text evidence="1">During catalysis, the active site Cys acts as a nucleophile attacking the alpha-carbonyl group of tRNA-bound glutamate with the formation of a thioester intermediate between enzyme and glutamate, and the concomitant release of tRNA(Glu). The thioester intermediate is finally reduced by direct hydride transfer from NADPH, to form the product GSA.</text>
</comment>
<comment type="similarity">
    <text evidence="1">Belongs to the glutamyl-tRNA reductase family.</text>
</comment>
<feature type="chain" id="PRO_1000004594" description="Glutamyl-tRNA reductase">
    <location>
        <begin position="1"/>
        <end position="418"/>
    </location>
</feature>
<feature type="active site" description="Nucleophile" evidence="1">
    <location>
        <position position="50"/>
    </location>
</feature>
<feature type="binding site" evidence="1">
    <location>
        <begin position="49"/>
        <end position="52"/>
    </location>
    <ligand>
        <name>substrate</name>
    </ligand>
</feature>
<feature type="binding site" evidence="1">
    <location>
        <position position="105"/>
    </location>
    <ligand>
        <name>substrate</name>
    </ligand>
</feature>
<feature type="binding site" evidence="1">
    <location>
        <begin position="110"/>
        <end position="112"/>
    </location>
    <ligand>
        <name>substrate</name>
    </ligand>
</feature>
<feature type="binding site" evidence="1">
    <location>
        <position position="116"/>
    </location>
    <ligand>
        <name>substrate</name>
    </ligand>
</feature>
<feature type="binding site" evidence="1">
    <location>
        <begin position="185"/>
        <end position="190"/>
    </location>
    <ligand>
        <name>NADP(+)</name>
        <dbReference type="ChEBI" id="CHEBI:58349"/>
    </ligand>
</feature>
<feature type="site" description="Important for activity" evidence="1">
    <location>
        <position position="95"/>
    </location>
</feature>
<evidence type="ECO:0000255" key="1">
    <source>
        <dbReference type="HAMAP-Rule" id="MF_00087"/>
    </source>
</evidence>
<proteinExistence type="inferred from homology"/>
<dbReference type="EC" id="1.2.1.70" evidence="1"/>
<dbReference type="EMBL" id="CR555306">
    <property type="protein sequence ID" value="CAI06745.1"/>
    <property type="molecule type" value="Genomic_DNA"/>
</dbReference>
<dbReference type="RefSeq" id="WP_011236475.1">
    <property type="nucleotide sequence ID" value="NC_006513.1"/>
</dbReference>
<dbReference type="SMR" id="Q5P7G6"/>
<dbReference type="STRING" id="76114.ebA1179"/>
<dbReference type="KEGG" id="eba:ebA1179"/>
<dbReference type="eggNOG" id="COG0373">
    <property type="taxonomic scope" value="Bacteria"/>
</dbReference>
<dbReference type="HOGENOM" id="CLU_035113_2_2_4"/>
<dbReference type="OrthoDB" id="110209at2"/>
<dbReference type="UniPathway" id="UPA00251">
    <property type="reaction ID" value="UER00316"/>
</dbReference>
<dbReference type="Proteomes" id="UP000006552">
    <property type="component" value="Chromosome"/>
</dbReference>
<dbReference type="GO" id="GO:0008883">
    <property type="term" value="F:glutamyl-tRNA reductase activity"/>
    <property type="evidence" value="ECO:0007669"/>
    <property type="project" value="UniProtKB-UniRule"/>
</dbReference>
<dbReference type="GO" id="GO:0050661">
    <property type="term" value="F:NADP binding"/>
    <property type="evidence" value="ECO:0007669"/>
    <property type="project" value="InterPro"/>
</dbReference>
<dbReference type="GO" id="GO:0019353">
    <property type="term" value="P:protoporphyrinogen IX biosynthetic process from glutamate"/>
    <property type="evidence" value="ECO:0007669"/>
    <property type="project" value="TreeGrafter"/>
</dbReference>
<dbReference type="CDD" id="cd05213">
    <property type="entry name" value="NAD_bind_Glutamyl_tRNA_reduct"/>
    <property type="match status" value="1"/>
</dbReference>
<dbReference type="FunFam" id="3.30.460.30:FF:000001">
    <property type="entry name" value="Glutamyl-tRNA reductase"/>
    <property type="match status" value="1"/>
</dbReference>
<dbReference type="FunFam" id="3.40.50.720:FF:000031">
    <property type="entry name" value="Glutamyl-tRNA reductase"/>
    <property type="match status" value="1"/>
</dbReference>
<dbReference type="Gene3D" id="3.30.460.30">
    <property type="entry name" value="Glutamyl-tRNA reductase, N-terminal domain"/>
    <property type="match status" value="1"/>
</dbReference>
<dbReference type="Gene3D" id="3.40.50.720">
    <property type="entry name" value="NAD(P)-binding Rossmann-like Domain"/>
    <property type="match status" value="1"/>
</dbReference>
<dbReference type="HAMAP" id="MF_00087">
    <property type="entry name" value="Glu_tRNA_reductase"/>
    <property type="match status" value="1"/>
</dbReference>
<dbReference type="InterPro" id="IPR000343">
    <property type="entry name" value="4pyrrol_synth_GluRdtase"/>
</dbReference>
<dbReference type="InterPro" id="IPR015896">
    <property type="entry name" value="4pyrrol_synth_GluRdtase_dimer"/>
</dbReference>
<dbReference type="InterPro" id="IPR015895">
    <property type="entry name" value="4pyrrol_synth_GluRdtase_N"/>
</dbReference>
<dbReference type="InterPro" id="IPR018214">
    <property type="entry name" value="GluRdtase_CS"/>
</dbReference>
<dbReference type="InterPro" id="IPR036453">
    <property type="entry name" value="GluRdtase_dimer_dom_sf"/>
</dbReference>
<dbReference type="InterPro" id="IPR036343">
    <property type="entry name" value="GluRdtase_N_sf"/>
</dbReference>
<dbReference type="InterPro" id="IPR036291">
    <property type="entry name" value="NAD(P)-bd_dom_sf"/>
</dbReference>
<dbReference type="InterPro" id="IPR006151">
    <property type="entry name" value="Shikm_DH/Glu-tRNA_Rdtase"/>
</dbReference>
<dbReference type="NCBIfam" id="TIGR01035">
    <property type="entry name" value="hemA"/>
    <property type="match status" value="1"/>
</dbReference>
<dbReference type="PANTHER" id="PTHR43013">
    <property type="entry name" value="GLUTAMYL-TRNA REDUCTASE"/>
    <property type="match status" value="1"/>
</dbReference>
<dbReference type="PANTHER" id="PTHR43013:SF1">
    <property type="entry name" value="GLUTAMYL-TRNA REDUCTASE"/>
    <property type="match status" value="1"/>
</dbReference>
<dbReference type="Pfam" id="PF00745">
    <property type="entry name" value="GlutR_dimer"/>
    <property type="match status" value="1"/>
</dbReference>
<dbReference type="Pfam" id="PF05201">
    <property type="entry name" value="GlutR_N"/>
    <property type="match status" value="1"/>
</dbReference>
<dbReference type="Pfam" id="PF01488">
    <property type="entry name" value="Shikimate_DH"/>
    <property type="match status" value="1"/>
</dbReference>
<dbReference type="PIRSF" id="PIRSF000445">
    <property type="entry name" value="4pyrrol_synth_GluRdtase"/>
    <property type="match status" value="1"/>
</dbReference>
<dbReference type="SUPFAM" id="SSF69742">
    <property type="entry name" value="Glutamyl tRNA-reductase catalytic, N-terminal domain"/>
    <property type="match status" value="1"/>
</dbReference>
<dbReference type="SUPFAM" id="SSF69075">
    <property type="entry name" value="Glutamyl tRNA-reductase dimerization domain"/>
    <property type="match status" value="1"/>
</dbReference>
<dbReference type="SUPFAM" id="SSF51735">
    <property type="entry name" value="NAD(P)-binding Rossmann-fold domains"/>
    <property type="match status" value="1"/>
</dbReference>
<dbReference type="PROSITE" id="PS00747">
    <property type="entry name" value="GLUTR"/>
    <property type="match status" value="1"/>
</dbReference>
<gene>
    <name evidence="1" type="primary">hemA</name>
    <name type="ordered locus">AZOSEA06230</name>
    <name type="ORF">ebA1179</name>
</gene>
<reference key="1">
    <citation type="journal article" date="2005" name="Arch. Microbiol.">
        <title>The genome sequence of an anaerobic aromatic-degrading denitrifying bacterium, strain EbN1.</title>
        <authorList>
            <person name="Rabus R."/>
            <person name="Kube M."/>
            <person name="Heider J."/>
            <person name="Beck A."/>
            <person name="Heitmann K."/>
            <person name="Widdel F."/>
            <person name="Reinhardt R."/>
        </authorList>
    </citation>
    <scope>NUCLEOTIDE SEQUENCE [LARGE SCALE GENOMIC DNA]</scope>
    <source>
        <strain>DSM 19018 / LMG 30748 / EbN1</strain>
    </source>
</reference>
<protein>
    <recommendedName>
        <fullName evidence="1">Glutamyl-tRNA reductase</fullName>
        <shortName evidence="1">GluTR</shortName>
        <ecNumber evidence="1">1.2.1.70</ecNumber>
    </recommendedName>
</protein>
<organism>
    <name type="scientific">Aromatoleum aromaticum (strain DSM 19018 / LMG 30748 / EbN1)</name>
    <name type="common">Azoarcus sp. (strain EbN1)</name>
    <dbReference type="NCBI Taxonomy" id="76114"/>
    <lineage>
        <taxon>Bacteria</taxon>
        <taxon>Pseudomonadati</taxon>
        <taxon>Pseudomonadota</taxon>
        <taxon>Betaproteobacteria</taxon>
        <taxon>Rhodocyclales</taxon>
        <taxon>Rhodocyclaceae</taxon>
        <taxon>Aromatoleum</taxon>
    </lineage>
</organism>
<sequence>MQLYALGLNHHTAPLTIREQVAFQPERLDDALHDLTHERTVREAAILSTCNRTELYFATEQPQHAADWLARFHHMPLSEVSPYLYTYPQRDAIRHVFRVASGLDSMVLGEPQILGQVKDAVRRAEEAGTMGTLLHKLFQNTFAVAKEVRSTTAIGANIVSMAAAALHLSERIFERMSDQRVLFIGAGEMIELCAAYFAGACPKRIAVANRTEARAQLVAHRFGAEVMRLDVVGEMLPHFDVVVSCTASPLPIVGLGMVERAIKARRHRPIVMVDLAVPRDIEAEVGELDDVFLYTVDDLAQIVDAGLESRQQAVLEAEEIIDSRVNGFLHWMQARDAVPTIRALRQHAETVRAVELERATRLLAKGEDPRKVLDALSHGLINKLMHSPTRYLNQSEGEQQADASRLVQQLFNLSNSPD</sequence>
<name>HEM1_AROAE</name>
<accession>Q5P7G6</accession>
<keyword id="KW-0521">NADP</keyword>
<keyword id="KW-0560">Oxidoreductase</keyword>
<keyword id="KW-0627">Porphyrin biosynthesis</keyword>
<keyword id="KW-1185">Reference proteome</keyword>